<dbReference type="EC" id="1.2.1.70" evidence="1"/>
<dbReference type="EMBL" id="CP000058">
    <property type="protein sequence ID" value="AAZ36291.1"/>
    <property type="molecule type" value="Genomic_DNA"/>
</dbReference>
<dbReference type="RefSeq" id="WP_002552149.1">
    <property type="nucleotide sequence ID" value="NC_005773.3"/>
</dbReference>
<dbReference type="SMR" id="Q48MV5"/>
<dbReference type="GeneID" id="69857987"/>
<dbReference type="KEGG" id="psp:PSPPH_0996"/>
<dbReference type="eggNOG" id="COG0373">
    <property type="taxonomic scope" value="Bacteria"/>
</dbReference>
<dbReference type="HOGENOM" id="CLU_035113_2_2_6"/>
<dbReference type="UniPathway" id="UPA00251">
    <property type="reaction ID" value="UER00316"/>
</dbReference>
<dbReference type="Proteomes" id="UP000000551">
    <property type="component" value="Chromosome"/>
</dbReference>
<dbReference type="GO" id="GO:0008883">
    <property type="term" value="F:glutamyl-tRNA reductase activity"/>
    <property type="evidence" value="ECO:0007669"/>
    <property type="project" value="UniProtKB-UniRule"/>
</dbReference>
<dbReference type="GO" id="GO:0050661">
    <property type="term" value="F:NADP binding"/>
    <property type="evidence" value="ECO:0007669"/>
    <property type="project" value="InterPro"/>
</dbReference>
<dbReference type="GO" id="GO:0019353">
    <property type="term" value="P:protoporphyrinogen IX biosynthetic process from glutamate"/>
    <property type="evidence" value="ECO:0007669"/>
    <property type="project" value="TreeGrafter"/>
</dbReference>
<dbReference type="CDD" id="cd05213">
    <property type="entry name" value="NAD_bind_Glutamyl_tRNA_reduct"/>
    <property type="match status" value="1"/>
</dbReference>
<dbReference type="FunFam" id="3.30.460.30:FF:000001">
    <property type="entry name" value="Glutamyl-tRNA reductase"/>
    <property type="match status" value="1"/>
</dbReference>
<dbReference type="FunFam" id="3.40.50.720:FF:000031">
    <property type="entry name" value="Glutamyl-tRNA reductase"/>
    <property type="match status" value="1"/>
</dbReference>
<dbReference type="Gene3D" id="3.30.460.30">
    <property type="entry name" value="Glutamyl-tRNA reductase, N-terminal domain"/>
    <property type="match status" value="1"/>
</dbReference>
<dbReference type="Gene3D" id="3.40.50.720">
    <property type="entry name" value="NAD(P)-binding Rossmann-like Domain"/>
    <property type="match status" value="1"/>
</dbReference>
<dbReference type="HAMAP" id="MF_00087">
    <property type="entry name" value="Glu_tRNA_reductase"/>
    <property type="match status" value="1"/>
</dbReference>
<dbReference type="InterPro" id="IPR000343">
    <property type="entry name" value="4pyrrol_synth_GluRdtase"/>
</dbReference>
<dbReference type="InterPro" id="IPR015896">
    <property type="entry name" value="4pyrrol_synth_GluRdtase_dimer"/>
</dbReference>
<dbReference type="InterPro" id="IPR015895">
    <property type="entry name" value="4pyrrol_synth_GluRdtase_N"/>
</dbReference>
<dbReference type="InterPro" id="IPR018214">
    <property type="entry name" value="GluRdtase_CS"/>
</dbReference>
<dbReference type="InterPro" id="IPR036453">
    <property type="entry name" value="GluRdtase_dimer_dom_sf"/>
</dbReference>
<dbReference type="InterPro" id="IPR036343">
    <property type="entry name" value="GluRdtase_N_sf"/>
</dbReference>
<dbReference type="InterPro" id="IPR036291">
    <property type="entry name" value="NAD(P)-bd_dom_sf"/>
</dbReference>
<dbReference type="InterPro" id="IPR006151">
    <property type="entry name" value="Shikm_DH/Glu-tRNA_Rdtase"/>
</dbReference>
<dbReference type="NCBIfam" id="TIGR01035">
    <property type="entry name" value="hemA"/>
    <property type="match status" value="1"/>
</dbReference>
<dbReference type="PANTHER" id="PTHR43013">
    <property type="entry name" value="GLUTAMYL-TRNA REDUCTASE"/>
    <property type="match status" value="1"/>
</dbReference>
<dbReference type="PANTHER" id="PTHR43013:SF1">
    <property type="entry name" value="GLUTAMYL-TRNA REDUCTASE"/>
    <property type="match status" value="1"/>
</dbReference>
<dbReference type="Pfam" id="PF00745">
    <property type="entry name" value="GlutR_dimer"/>
    <property type="match status" value="1"/>
</dbReference>
<dbReference type="Pfam" id="PF05201">
    <property type="entry name" value="GlutR_N"/>
    <property type="match status" value="1"/>
</dbReference>
<dbReference type="Pfam" id="PF01488">
    <property type="entry name" value="Shikimate_DH"/>
    <property type="match status" value="1"/>
</dbReference>
<dbReference type="PIRSF" id="PIRSF000445">
    <property type="entry name" value="4pyrrol_synth_GluRdtase"/>
    <property type="match status" value="1"/>
</dbReference>
<dbReference type="SUPFAM" id="SSF69742">
    <property type="entry name" value="Glutamyl tRNA-reductase catalytic, N-terminal domain"/>
    <property type="match status" value="1"/>
</dbReference>
<dbReference type="SUPFAM" id="SSF69075">
    <property type="entry name" value="Glutamyl tRNA-reductase dimerization domain"/>
    <property type="match status" value="1"/>
</dbReference>
<dbReference type="SUPFAM" id="SSF51735">
    <property type="entry name" value="NAD(P)-binding Rossmann-fold domains"/>
    <property type="match status" value="1"/>
</dbReference>
<dbReference type="PROSITE" id="PS00747">
    <property type="entry name" value="GLUTR"/>
    <property type="match status" value="1"/>
</dbReference>
<reference key="1">
    <citation type="journal article" date="2005" name="J. Bacteriol.">
        <title>Whole-genome sequence analysis of Pseudomonas syringae pv. phaseolicola 1448A reveals divergence among pathovars in genes involved in virulence and transposition.</title>
        <authorList>
            <person name="Joardar V."/>
            <person name="Lindeberg M."/>
            <person name="Jackson R.W."/>
            <person name="Selengut J."/>
            <person name="Dodson R."/>
            <person name="Brinkac L.M."/>
            <person name="Daugherty S.C."/>
            <person name="DeBoy R.T."/>
            <person name="Durkin A.S."/>
            <person name="Gwinn Giglio M."/>
            <person name="Madupu R."/>
            <person name="Nelson W.C."/>
            <person name="Rosovitz M.J."/>
            <person name="Sullivan S.A."/>
            <person name="Crabtree J."/>
            <person name="Creasy T."/>
            <person name="Davidsen T.M."/>
            <person name="Haft D.H."/>
            <person name="Zafar N."/>
            <person name="Zhou L."/>
            <person name="Halpin R."/>
            <person name="Holley T."/>
            <person name="Khouri H.M."/>
            <person name="Feldblyum T.V."/>
            <person name="White O."/>
            <person name="Fraser C.M."/>
            <person name="Chatterjee A.K."/>
            <person name="Cartinhour S."/>
            <person name="Schneider D."/>
            <person name="Mansfield J.W."/>
            <person name="Collmer A."/>
            <person name="Buell R."/>
        </authorList>
    </citation>
    <scope>NUCLEOTIDE SEQUENCE [LARGE SCALE GENOMIC DNA]</scope>
    <source>
        <strain>1448A / Race 6</strain>
    </source>
</reference>
<keyword id="KW-0521">NADP</keyword>
<keyword id="KW-0560">Oxidoreductase</keyword>
<keyword id="KW-0627">Porphyrin biosynthesis</keyword>
<gene>
    <name evidence="1" type="primary">hemA</name>
    <name type="ordered locus">PSPPH_0996</name>
</gene>
<accession>Q48MV5</accession>
<evidence type="ECO:0000255" key="1">
    <source>
        <dbReference type="HAMAP-Rule" id="MF_00087"/>
    </source>
</evidence>
<proteinExistence type="inferred from homology"/>
<name>HEM1_PSE14</name>
<sequence>MAFLALGINHKTASVDVRERVAFTPEQLVEALQQLCHLTESREAAILSTCNRSELYIEHEHLGADSILAWLANYHHLSLEELRASAYVHEDDAAVRHMMRVASGLDSLVLGEPQILGQMKSAYAVAREAGTVGPLLGRLFQATFSAAKQVRTDTAIGENPVSVAFAAVSLAKQIFSDLQRSQALLIGAGETITLVARHLHDLGVKRIVVANRTLERASMLAAEFGAHAVLLSDIPAELVNSDIVISSTASQLPILGKGAVESALKLRKHKPIFMVDIAVPRDIEPEVGELDDVYLYSVDDLHEVVAENLKSRQGAALAAEQLVSVGAEDFMSRLRELAAVDVLRAYRQQSERLRDEELSKAQRMLANGSNAEDVLIQLARGLTNKLLHAPSVQLKKLSAEGRVDALAMAQELFALGEGSTDKTPQ</sequence>
<protein>
    <recommendedName>
        <fullName evidence="1">Glutamyl-tRNA reductase</fullName>
        <shortName evidence="1">GluTR</shortName>
        <ecNumber evidence="1">1.2.1.70</ecNumber>
    </recommendedName>
</protein>
<organism>
    <name type="scientific">Pseudomonas savastanoi pv. phaseolicola (strain 1448A / Race 6)</name>
    <name type="common">Pseudomonas syringae pv. phaseolicola (strain 1448A / Race 6)</name>
    <dbReference type="NCBI Taxonomy" id="264730"/>
    <lineage>
        <taxon>Bacteria</taxon>
        <taxon>Pseudomonadati</taxon>
        <taxon>Pseudomonadota</taxon>
        <taxon>Gammaproteobacteria</taxon>
        <taxon>Pseudomonadales</taxon>
        <taxon>Pseudomonadaceae</taxon>
        <taxon>Pseudomonas</taxon>
    </lineage>
</organism>
<comment type="function">
    <text evidence="1">Catalyzes the NADPH-dependent reduction of glutamyl-tRNA(Glu) to glutamate 1-semialdehyde (GSA).</text>
</comment>
<comment type="catalytic activity">
    <reaction evidence="1">
        <text>(S)-4-amino-5-oxopentanoate + tRNA(Glu) + NADP(+) = L-glutamyl-tRNA(Glu) + NADPH + H(+)</text>
        <dbReference type="Rhea" id="RHEA:12344"/>
        <dbReference type="Rhea" id="RHEA-COMP:9663"/>
        <dbReference type="Rhea" id="RHEA-COMP:9680"/>
        <dbReference type="ChEBI" id="CHEBI:15378"/>
        <dbReference type="ChEBI" id="CHEBI:57501"/>
        <dbReference type="ChEBI" id="CHEBI:57783"/>
        <dbReference type="ChEBI" id="CHEBI:58349"/>
        <dbReference type="ChEBI" id="CHEBI:78442"/>
        <dbReference type="ChEBI" id="CHEBI:78520"/>
        <dbReference type="EC" id="1.2.1.70"/>
    </reaction>
</comment>
<comment type="pathway">
    <text evidence="1">Porphyrin-containing compound metabolism; protoporphyrin-IX biosynthesis; 5-aminolevulinate from L-glutamyl-tRNA(Glu): step 1/2.</text>
</comment>
<comment type="subunit">
    <text evidence="1">Homodimer.</text>
</comment>
<comment type="domain">
    <text evidence="1">Possesses an unusual extended V-shaped dimeric structure with each monomer consisting of three distinct domains arranged along a curved 'spinal' alpha-helix. The N-terminal catalytic domain specifically recognizes the glutamate moiety of the substrate. The second domain is the NADPH-binding domain, and the third C-terminal domain is responsible for dimerization.</text>
</comment>
<comment type="miscellaneous">
    <text evidence="1">During catalysis, the active site Cys acts as a nucleophile attacking the alpha-carbonyl group of tRNA-bound glutamate with the formation of a thioester intermediate between enzyme and glutamate, and the concomitant release of tRNA(Glu). The thioester intermediate is finally reduced by direct hydride transfer from NADPH, to form the product GSA.</text>
</comment>
<comment type="similarity">
    <text evidence="1">Belongs to the glutamyl-tRNA reductase family.</text>
</comment>
<feature type="chain" id="PRO_1000004668" description="Glutamyl-tRNA reductase">
    <location>
        <begin position="1"/>
        <end position="425"/>
    </location>
</feature>
<feature type="active site" description="Nucleophile" evidence="1">
    <location>
        <position position="50"/>
    </location>
</feature>
<feature type="binding site" evidence="1">
    <location>
        <begin position="49"/>
        <end position="52"/>
    </location>
    <ligand>
        <name>substrate</name>
    </ligand>
</feature>
<feature type="binding site" evidence="1">
    <location>
        <position position="107"/>
    </location>
    <ligand>
        <name>substrate</name>
    </ligand>
</feature>
<feature type="binding site" evidence="1">
    <location>
        <begin position="112"/>
        <end position="114"/>
    </location>
    <ligand>
        <name>substrate</name>
    </ligand>
</feature>
<feature type="binding site" evidence="1">
    <location>
        <position position="118"/>
    </location>
    <ligand>
        <name>substrate</name>
    </ligand>
</feature>
<feature type="binding site" evidence="1">
    <location>
        <begin position="187"/>
        <end position="192"/>
    </location>
    <ligand>
        <name>NADP(+)</name>
        <dbReference type="ChEBI" id="CHEBI:58349"/>
    </ligand>
</feature>
<feature type="site" description="Important for activity" evidence="1">
    <location>
        <position position="97"/>
    </location>
</feature>